<organism>
    <name type="scientific">Homo sapiens</name>
    <name type="common">Human</name>
    <dbReference type="NCBI Taxonomy" id="9606"/>
    <lineage>
        <taxon>Eukaryota</taxon>
        <taxon>Metazoa</taxon>
        <taxon>Chordata</taxon>
        <taxon>Craniata</taxon>
        <taxon>Vertebrata</taxon>
        <taxon>Euteleostomi</taxon>
        <taxon>Mammalia</taxon>
        <taxon>Eutheria</taxon>
        <taxon>Euarchontoglires</taxon>
        <taxon>Primates</taxon>
        <taxon>Haplorrhini</taxon>
        <taxon>Catarrhini</taxon>
        <taxon>Hominidae</taxon>
        <taxon>Homo</taxon>
    </lineage>
</organism>
<protein>
    <recommendedName>
        <fullName>Ubiquilin-3</fullName>
    </recommendedName>
</protein>
<dbReference type="EMBL" id="AF137396">
    <property type="protein sequence ID" value="AAG41675.1"/>
    <property type="status" value="ALT_SEQ"/>
    <property type="molecule type" value="Genomic_DNA"/>
</dbReference>
<dbReference type="EMBL" id="AF230481">
    <property type="protein sequence ID" value="AAF67143.1"/>
    <property type="molecule type" value="mRNA"/>
</dbReference>
<dbReference type="EMBL" id="BC036743">
    <property type="protein sequence ID" value="AAH36743.1"/>
    <property type="molecule type" value="mRNA"/>
</dbReference>
<dbReference type="CCDS" id="CCDS7758.1"/>
<dbReference type="RefSeq" id="NP_001334025.1">
    <property type="nucleotide sequence ID" value="NM_001347096.2"/>
</dbReference>
<dbReference type="RefSeq" id="NP_059509.1">
    <property type="nucleotide sequence ID" value="NM_017481.4"/>
</dbReference>
<dbReference type="PDB" id="1WX7">
    <property type="method" value="NMR"/>
    <property type="chains" value="A=12-104"/>
</dbReference>
<dbReference type="PDB" id="1YQB">
    <property type="method" value="X-ray"/>
    <property type="resolution" value="2.00 A"/>
    <property type="chains" value="A=19-99"/>
</dbReference>
<dbReference type="PDB" id="2DAH">
    <property type="method" value="NMR"/>
    <property type="chains" value="A=615-655"/>
</dbReference>
<dbReference type="PDBsum" id="1WX7"/>
<dbReference type="PDBsum" id="1YQB"/>
<dbReference type="PDBsum" id="2DAH"/>
<dbReference type="BMRB" id="Q9H347"/>
<dbReference type="SMR" id="Q9H347"/>
<dbReference type="BioGRID" id="119093">
    <property type="interactions" value="3"/>
</dbReference>
<dbReference type="FunCoup" id="Q9H347">
    <property type="interactions" value="280"/>
</dbReference>
<dbReference type="IntAct" id="Q9H347">
    <property type="interactions" value="7"/>
</dbReference>
<dbReference type="STRING" id="9606.ENSP00000347997"/>
<dbReference type="GlyGen" id="Q9H347">
    <property type="glycosylation" value="1 site, 1 O-linked glycan (1 site)"/>
</dbReference>
<dbReference type="iPTMnet" id="Q9H347"/>
<dbReference type="PhosphoSitePlus" id="Q9H347"/>
<dbReference type="BioMuta" id="UBQLN3"/>
<dbReference type="DMDM" id="48474643"/>
<dbReference type="jPOST" id="Q9H347"/>
<dbReference type="MassIVE" id="Q9H347"/>
<dbReference type="PaxDb" id="9606-ENSP00000347997"/>
<dbReference type="PeptideAtlas" id="Q9H347"/>
<dbReference type="ProteomicsDB" id="80676"/>
<dbReference type="Antibodypedia" id="11058">
    <property type="antibodies" value="221 antibodies from 26 providers"/>
</dbReference>
<dbReference type="DNASU" id="50613"/>
<dbReference type="Ensembl" id="ENST00000311659.5">
    <property type="protein sequence ID" value="ENSP00000347997.2"/>
    <property type="gene ID" value="ENSG00000175520.9"/>
</dbReference>
<dbReference type="GeneID" id="50613"/>
<dbReference type="KEGG" id="hsa:50613"/>
<dbReference type="MANE-Select" id="ENST00000311659.5">
    <property type="protein sequence ID" value="ENSP00000347997.2"/>
    <property type="RefSeq nucleotide sequence ID" value="NM_017481.4"/>
    <property type="RefSeq protein sequence ID" value="NP_059509.1"/>
</dbReference>
<dbReference type="UCSC" id="uc001may.2">
    <property type="organism name" value="human"/>
</dbReference>
<dbReference type="AGR" id="HGNC:12510"/>
<dbReference type="CTD" id="50613"/>
<dbReference type="DisGeNET" id="50613"/>
<dbReference type="GeneCards" id="UBQLN3"/>
<dbReference type="HGNC" id="HGNC:12510">
    <property type="gene designation" value="UBQLN3"/>
</dbReference>
<dbReference type="HPA" id="ENSG00000175520">
    <property type="expression patterns" value="Tissue enriched (testis)"/>
</dbReference>
<dbReference type="MIM" id="605473">
    <property type="type" value="gene"/>
</dbReference>
<dbReference type="neXtProt" id="NX_Q9H347"/>
<dbReference type="OpenTargets" id="ENSG00000175520"/>
<dbReference type="PharmGKB" id="PA37157"/>
<dbReference type="VEuPathDB" id="HostDB:ENSG00000175520"/>
<dbReference type="eggNOG" id="KOG0010">
    <property type="taxonomic scope" value="Eukaryota"/>
</dbReference>
<dbReference type="GeneTree" id="ENSGT00940000162912"/>
<dbReference type="HOGENOM" id="CLU_024293_3_0_1"/>
<dbReference type="InParanoid" id="Q9H347"/>
<dbReference type="OMA" id="LLWFMPC"/>
<dbReference type="OrthoDB" id="267397at2759"/>
<dbReference type="PAN-GO" id="Q9H347">
    <property type="GO annotations" value="3 GO annotations based on evolutionary models"/>
</dbReference>
<dbReference type="PhylomeDB" id="Q9H347"/>
<dbReference type="TreeFam" id="TF314412"/>
<dbReference type="PathwayCommons" id="Q9H347"/>
<dbReference type="SignaLink" id="Q9H347"/>
<dbReference type="BioGRID-ORCS" id="50613">
    <property type="hits" value="12 hits in 1144 CRISPR screens"/>
</dbReference>
<dbReference type="ChiTaRS" id="UBQLN3">
    <property type="organism name" value="human"/>
</dbReference>
<dbReference type="EvolutionaryTrace" id="Q9H347"/>
<dbReference type="GenomeRNAi" id="50613"/>
<dbReference type="Pharos" id="Q9H347">
    <property type="development level" value="Tbio"/>
</dbReference>
<dbReference type="PRO" id="PR:Q9H347"/>
<dbReference type="Proteomes" id="UP000005640">
    <property type="component" value="Chromosome 11"/>
</dbReference>
<dbReference type="RNAct" id="Q9H347">
    <property type="molecule type" value="protein"/>
</dbReference>
<dbReference type="Bgee" id="ENSG00000175520">
    <property type="expression patterns" value="Expressed in sperm and 43 other cell types or tissues"/>
</dbReference>
<dbReference type="ExpressionAtlas" id="Q9H347">
    <property type="expression patterns" value="baseline and differential"/>
</dbReference>
<dbReference type="GO" id="GO:0005829">
    <property type="term" value="C:cytosol"/>
    <property type="evidence" value="ECO:0000318"/>
    <property type="project" value="GO_Central"/>
</dbReference>
<dbReference type="GO" id="GO:0031593">
    <property type="term" value="F:polyubiquitin modification-dependent protein binding"/>
    <property type="evidence" value="ECO:0000318"/>
    <property type="project" value="GO_Central"/>
</dbReference>
<dbReference type="GO" id="GO:0033554">
    <property type="term" value="P:cellular response to stress"/>
    <property type="evidence" value="ECO:0007669"/>
    <property type="project" value="UniProtKB-ARBA"/>
</dbReference>
<dbReference type="GO" id="GO:0061136">
    <property type="term" value="P:regulation of proteasomal protein catabolic process"/>
    <property type="evidence" value="ECO:0007669"/>
    <property type="project" value="UniProtKB-ARBA"/>
</dbReference>
<dbReference type="GO" id="GO:0006511">
    <property type="term" value="P:ubiquitin-dependent protein catabolic process"/>
    <property type="evidence" value="ECO:0000318"/>
    <property type="project" value="GO_Central"/>
</dbReference>
<dbReference type="CDD" id="cd14399">
    <property type="entry name" value="UBA_PLICs"/>
    <property type="match status" value="1"/>
</dbReference>
<dbReference type="CDD" id="cd01808">
    <property type="entry name" value="Ubl_PLICs"/>
    <property type="match status" value="1"/>
</dbReference>
<dbReference type="FunFam" id="1.10.260.100:FF:000001">
    <property type="entry name" value="Ubiquilin 1"/>
    <property type="match status" value="1"/>
</dbReference>
<dbReference type="FunFam" id="1.10.8.10:FF:000082">
    <property type="entry name" value="Ubiquilin 3"/>
    <property type="match status" value="1"/>
</dbReference>
<dbReference type="FunFam" id="3.10.20.90:FF:000198">
    <property type="entry name" value="Ubiquilin 3"/>
    <property type="match status" value="1"/>
</dbReference>
<dbReference type="Gene3D" id="1.10.260.100">
    <property type="match status" value="1"/>
</dbReference>
<dbReference type="Gene3D" id="1.10.8.10">
    <property type="entry name" value="DNA helicase RuvA subunit, C-terminal domain"/>
    <property type="match status" value="1"/>
</dbReference>
<dbReference type="Gene3D" id="3.10.20.90">
    <property type="entry name" value="Phosphatidylinositol 3-kinase Catalytic Subunit, Chain A, domain 1"/>
    <property type="match status" value="1"/>
</dbReference>
<dbReference type="InterPro" id="IPR006636">
    <property type="entry name" value="STI1_HS-bd"/>
</dbReference>
<dbReference type="InterPro" id="IPR015940">
    <property type="entry name" value="UBA"/>
</dbReference>
<dbReference type="InterPro" id="IPR009060">
    <property type="entry name" value="UBA-like_sf"/>
</dbReference>
<dbReference type="InterPro" id="IPR015496">
    <property type="entry name" value="Ubiquilin"/>
</dbReference>
<dbReference type="InterPro" id="IPR000626">
    <property type="entry name" value="Ubiquitin-like_dom"/>
</dbReference>
<dbReference type="InterPro" id="IPR029071">
    <property type="entry name" value="Ubiquitin-like_domsf"/>
</dbReference>
<dbReference type="PANTHER" id="PTHR10677">
    <property type="entry name" value="UBIQUILIN"/>
    <property type="match status" value="1"/>
</dbReference>
<dbReference type="PANTHER" id="PTHR10677:SF4">
    <property type="entry name" value="UBIQUILIN-3"/>
    <property type="match status" value="1"/>
</dbReference>
<dbReference type="Pfam" id="PF00627">
    <property type="entry name" value="UBA"/>
    <property type="match status" value="1"/>
</dbReference>
<dbReference type="Pfam" id="PF00240">
    <property type="entry name" value="ubiquitin"/>
    <property type="match status" value="1"/>
</dbReference>
<dbReference type="Pfam" id="PF23195">
    <property type="entry name" value="UBQLN1"/>
    <property type="match status" value="1"/>
</dbReference>
<dbReference type="SMART" id="SM00727">
    <property type="entry name" value="STI1"/>
    <property type="match status" value="1"/>
</dbReference>
<dbReference type="SMART" id="SM00165">
    <property type="entry name" value="UBA"/>
    <property type="match status" value="1"/>
</dbReference>
<dbReference type="SMART" id="SM00213">
    <property type="entry name" value="UBQ"/>
    <property type="match status" value="1"/>
</dbReference>
<dbReference type="SUPFAM" id="SSF46934">
    <property type="entry name" value="UBA-like"/>
    <property type="match status" value="1"/>
</dbReference>
<dbReference type="SUPFAM" id="SSF54236">
    <property type="entry name" value="Ubiquitin-like"/>
    <property type="match status" value="1"/>
</dbReference>
<dbReference type="PROSITE" id="PS50030">
    <property type="entry name" value="UBA"/>
    <property type="match status" value="1"/>
</dbReference>
<dbReference type="PROSITE" id="PS50053">
    <property type="entry name" value="UBIQUITIN_2"/>
    <property type="match status" value="1"/>
</dbReference>
<reference key="1">
    <citation type="journal article" date="2000" name="Proc. Natl. Acad. Sci. U.S.A.">
        <title>Comparative structural and functional analysis of the olfactory receptor genes flanking the human and mouse beta-globin gene clusters.</title>
        <authorList>
            <person name="Bulger M."/>
            <person name="Bender M.A."/>
            <person name="van Doorninck J.H."/>
            <person name="Wertman B."/>
            <person name="Farrell C.M."/>
            <person name="Felsenfeld G."/>
            <person name="Groudine M."/>
            <person name="Hardison R."/>
        </authorList>
    </citation>
    <scope>NUCLEOTIDE SEQUENCE [GENOMIC DNA]</scope>
</reference>
<reference key="2">
    <citation type="journal article" date="2000" name="Gene">
        <title>Molecular cloning, chromosome mapping and characterization of UBQLN3 a testis-specific gene that contains an ubiquitin-like domain.</title>
        <authorList>
            <person name="Conklin D."/>
            <person name="Holderman S."/>
            <person name="Whitmore T.E."/>
            <person name="Maurer M."/>
            <person name="Feldhaus A.L."/>
        </authorList>
    </citation>
    <scope>NUCLEOTIDE SEQUENCE [MRNA]</scope>
    <scope>TISSUE SPECIFICITY</scope>
    <source>
        <tissue>Testis</tissue>
    </source>
</reference>
<reference key="3">
    <citation type="journal article" date="2004" name="Genome Res.">
        <title>The status, quality, and expansion of the NIH full-length cDNA project: the Mammalian Gene Collection (MGC).</title>
        <authorList>
            <consortium name="The MGC Project Team"/>
        </authorList>
    </citation>
    <scope>NUCLEOTIDE SEQUENCE [LARGE SCALE MRNA]</scope>
    <source>
        <tissue>Brain</tissue>
    </source>
</reference>
<reference key="4">
    <citation type="journal article" date="2014" name="BMC Evol. Biol.">
        <title>The ubiquilin gene family: evolutionary patterns and functional insights.</title>
        <authorList>
            <person name="Marin I."/>
        </authorList>
    </citation>
    <scope>REVIEW</scope>
</reference>
<reference key="5">
    <citation type="submission" date="2005-07" db="PDB data bank">
        <title>Solution structure of the N-terminal ubiquitin-like domain in the human ubiquilin 3 (UBQLN3).</title>
        <authorList>
            <consortium name="RIKEN structural genomics initiative (RSGI)"/>
        </authorList>
    </citation>
    <scope>STRUCTURE BY NMR OF 11-104</scope>
</reference>
<reference key="6">
    <citation type="submission" date="2006-01" db="PDB data bank">
        <title>The ubiquitin-like domain of human ubiquilin 3.</title>
        <authorList>
            <consortium name="Structural genomics consortium (SGC)"/>
        </authorList>
    </citation>
    <scope>X-RAY CRYSTALLOGRAPHY (2.0 ANGSTROMS) OF 19-99</scope>
</reference>
<proteinExistence type="evidence at protein level"/>
<accession>Q9H347</accession>
<accession>Q9NRE0</accession>
<name>UBQL3_HUMAN</name>
<evidence type="ECO:0000255" key="1"/>
<evidence type="ECO:0000255" key="2">
    <source>
        <dbReference type="PROSITE-ProRule" id="PRU00212"/>
    </source>
</evidence>
<evidence type="ECO:0000255" key="3">
    <source>
        <dbReference type="PROSITE-ProRule" id="PRU00214"/>
    </source>
</evidence>
<evidence type="ECO:0000256" key="4">
    <source>
        <dbReference type="SAM" id="MobiDB-lite"/>
    </source>
</evidence>
<evidence type="ECO:0000269" key="5">
    <source>
    </source>
</evidence>
<evidence type="ECO:0000305" key="6"/>
<evidence type="ECO:0007829" key="7">
    <source>
        <dbReference type="PDB" id="1YQB"/>
    </source>
</evidence>
<evidence type="ECO:0007829" key="8">
    <source>
        <dbReference type="PDB" id="2DAH"/>
    </source>
</evidence>
<keyword id="KW-0002">3D-structure</keyword>
<keyword id="KW-1267">Proteomics identification</keyword>
<keyword id="KW-1185">Reference proteome</keyword>
<comment type="interaction">
    <interactant intactId="EBI-25832660">
        <id>Q9H347</id>
    </interactant>
    <interactant intactId="EBI-750475">
        <id>P45381</id>
        <label>ASPA</label>
    </interactant>
    <organismsDiffer>false</organismsDiffer>
    <experiments>3</experiments>
</comment>
<comment type="interaction">
    <interactant intactId="EBI-25832660">
        <id>Q9H347</id>
    </interactant>
    <interactant intactId="EBI-702390">
        <id>Q9UBB4</id>
        <label>ATXN10</label>
    </interactant>
    <organismsDiffer>false</organismsDiffer>
    <experiments>3</experiments>
</comment>
<comment type="interaction">
    <interactant intactId="EBI-25832660">
        <id>Q9H347</id>
    </interactant>
    <interactant intactId="EBI-7133736">
        <id>P07686</id>
        <label>HEXB</label>
    </interactant>
    <organismsDiffer>false</organismsDiffer>
    <experiments>3</experiments>
</comment>
<comment type="interaction">
    <interactant intactId="EBI-25832660">
        <id>Q9H347</id>
    </interactant>
    <interactant intactId="EBI-948266">
        <id>O14901</id>
        <label>KLF11</label>
    </interactant>
    <organismsDiffer>false</organismsDiffer>
    <experiments>3</experiments>
</comment>
<comment type="interaction">
    <interactant intactId="EBI-25832660">
        <id>Q9H347</id>
    </interactant>
    <interactant intactId="EBI-1391623">
        <id>P29474</id>
        <label>NOS3</label>
    </interactant>
    <organismsDiffer>false</organismsDiffer>
    <experiments>3</experiments>
</comment>
<comment type="interaction">
    <interactant intactId="EBI-25832660">
        <id>Q9H347</id>
    </interactant>
    <interactant intactId="EBI-2811583">
        <id>Q9BVL2</id>
        <label>NUP58</label>
    </interactant>
    <organismsDiffer>false</organismsDiffer>
    <experiments>3</experiments>
</comment>
<comment type="tissue specificity">
    <text evidence="5">Testis specific.</text>
</comment>
<comment type="sequence caution" evidence="6">
    <conflict type="erroneous gene model prediction">
        <sequence resource="EMBL-CDS" id="AAG41675"/>
    </conflict>
</comment>
<feature type="chain" id="PRO_0000211013" description="Ubiquilin-3">
    <location>
        <begin position="1"/>
        <end position="655"/>
    </location>
</feature>
<feature type="domain" description="Ubiquitin-like" evidence="3">
    <location>
        <begin position="22"/>
        <end position="98"/>
    </location>
</feature>
<feature type="domain" description="STI1" evidence="1">
    <location>
        <begin position="194"/>
        <end position="233"/>
    </location>
</feature>
<feature type="domain" description="UBA" evidence="2">
    <location>
        <begin position="609"/>
        <end position="655"/>
    </location>
</feature>
<feature type="region of interest" description="Disordered" evidence="4">
    <location>
        <begin position="102"/>
        <end position="124"/>
    </location>
</feature>
<feature type="region of interest" description="Disordered" evidence="4">
    <location>
        <begin position="277"/>
        <end position="330"/>
    </location>
</feature>
<feature type="region of interest" description="Disordered" evidence="4">
    <location>
        <begin position="364"/>
        <end position="399"/>
    </location>
</feature>
<feature type="region of interest" description="Disordered" evidence="4">
    <location>
        <begin position="412"/>
        <end position="447"/>
    </location>
</feature>
<feature type="compositionally biased region" description="Low complexity" evidence="4">
    <location>
        <begin position="110"/>
        <end position="122"/>
    </location>
</feature>
<feature type="compositionally biased region" description="Low complexity" evidence="4">
    <location>
        <begin position="279"/>
        <end position="290"/>
    </location>
</feature>
<feature type="compositionally biased region" description="Basic and acidic residues" evidence="4">
    <location>
        <begin position="318"/>
        <end position="330"/>
    </location>
</feature>
<feature type="compositionally biased region" description="Low complexity" evidence="4">
    <location>
        <begin position="377"/>
        <end position="395"/>
    </location>
</feature>
<feature type="compositionally biased region" description="Polar residues" evidence="4">
    <location>
        <begin position="432"/>
        <end position="441"/>
    </location>
</feature>
<feature type="sequence variant" id="VAR_052681" description="In dbSNP:rs2234446.">
    <original>C</original>
    <variation>R</variation>
    <location>
        <position position="255"/>
    </location>
</feature>
<feature type="sequence variant" id="VAR_052682" description="In dbSNP:rs2234449.">
    <original>N</original>
    <variation>D</variation>
    <location>
        <position position="285"/>
    </location>
</feature>
<feature type="sequence variant" id="VAR_052683" description="In dbSNP:rs2234450.">
    <original>T</original>
    <variation>A</variation>
    <location>
        <position position="287"/>
    </location>
</feature>
<feature type="sequence variant" id="VAR_052684" description="In dbSNP:rs2234451.">
    <original>T</original>
    <variation>S</variation>
    <location>
        <position position="290"/>
    </location>
</feature>
<feature type="sequence variant" id="VAR_034578" description="In dbSNP:rs2234455.">
    <original>M</original>
    <variation>T</variation>
    <location>
        <position position="546"/>
    </location>
</feature>
<feature type="sequence variant" id="VAR_020363" description="In dbSNP:rs2227271.">
    <original>R</original>
    <variation>Q</variation>
    <location>
        <position position="624"/>
    </location>
</feature>
<feature type="strand" evidence="7">
    <location>
        <begin position="21"/>
        <end position="27"/>
    </location>
</feature>
<feature type="strand" evidence="7">
    <location>
        <begin position="32"/>
        <end position="38"/>
    </location>
</feature>
<feature type="helix" evidence="7">
    <location>
        <begin position="43"/>
        <end position="54"/>
    </location>
</feature>
<feature type="helix" evidence="7">
    <location>
        <begin position="58"/>
        <end position="60"/>
    </location>
</feature>
<feature type="strand" evidence="7">
    <location>
        <begin position="61"/>
        <end position="65"/>
    </location>
</feature>
<feature type="helix" evidence="7">
    <location>
        <begin position="76"/>
        <end position="79"/>
    </location>
</feature>
<feature type="strand" evidence="7">
    <location>
        <begin position="86"/>
        <end position="91"/>
    </location>
</feature>
<feature type="helix" evidence="8">
    <location>
        <begin position="617"/>
        <end position="626"/>
    </location>
</feature>
<feature type="helix" evidence="8">
    <location>
        <begin position="631"/>
        <end position="641"/>
    </location>
</feature>
<feature type="helix" evidence="8">
    <location>
        <begin position="645"/>
        <end position="655"/>
    </location>
</feature>
<sequence>MAKGGEALPQGSPAPVQDPHLIKVTVKTPKDKEDFSVTDTCTIQQLKEEISQRFKAHPDQLVLIFAGKILKDPDSLAQCGVRDGLTVHLVIKRQHRAMGNECPAASVPTQGPSPGSLPQPSSIYPADGPPAFSLGLLTGLSRLGLAYRGFPDQPSSLMRQHVSVPEFVTQLIDDPFIPGLLSNTGLVRQLVLDNPHMQQLIQHNPEIGHILNNPEIMRQTLEFLRNPAMMQEMIRSQDRVLSNLESIPGGYNVLCTMYTDIMDPMLNAVQEQFGGNPFATATTDNATTTTSQPSRMENCDPLPNPWTSTHGGSGSRQGRQDGDQDAPDIRNRFPNFLGIIRLYDYLQQLHENPQSLGTYLQGTASALSQSQEPPPSVNRVPPSSPSSQEPGSGQPLPEESVAIKGRSSCPAFLRYPTENSTGQGGDQDGAGKSSTGHSTNLPDLVSGLGDSANRVPFAPLSFSPTAAIPGIPEPPWLPSPAYPRSLRPDGMNPAPQLQDEIQPQLPLLMHLQAAMANPRALQALRQIEQGLQVLATEAPRLLLWFMPCLAGTGSVAGGIESREDPLMSEDPLPNPPPEVFPALDSAELGFLSPPFLHMLQDLVSTNPQQLQPEAHFQVQLEQLRSMGFLNREANLQALIATGGDVDAAVEKLRQS</sequence>
<gene>
    <name type="primary">UBQLN3</name>
</gene>